<accession>Q85ZS6</accession>
<gene>
    <name evidence="1" type="primary">matK</name>
</gene>
<comment type="function">
    <text evidence="1">Usually encoded in the trnK tRNA gene intron. Probably assists in splicing its own and other chloroplast group II introns.</text>
</comment>
<comment type="subcellular location">
    <subcellularLocation>
        <location>Plastid</location>
        <location>Chloroplast</location>
    </subcellularLocation>
</comment>
<comment type="similarity">
    <text evidence="1">Belongs to the intron maturase 2 family. MatK subfamily.</text>
</comment>
<evidence type="ECO:0000255" key="1">
    <source>
        <dbReference type="HAMAP-Rule" id="MF_01390"/>
    </source>
</evidence>
<feature type="chain" id="PRO_0000143655" description="Maturase K">
    <location>
        <begin position="1"/>
        <end position="511"/>
    </location>
</feature>
<organism>
    <name type="scientific">Psathyrostachys juncea</name>
    <name type="common">Russian wildrye</name>
    <dbReference type="NCBI Taxonomy" id="4586"/>
    <lineage>
        <taxon>Eukaryota</taxon>
        <taxon>Viridiplantae</taxon>
        <taxon>Streptophyta</taxon>
        <taxon>Embryophyta</taxon>
        <taxon>Tracheophyta</taxon>
        <taxon>Spermatophyta</taxon>
        <taxon>Magnoliopsida</taxon>
        <taxon>Liliopsida</taxon>
        <taxon>Poales</taxon>
        <taxon>Poaceae</taxon>
        <taxon>BOP clade</taxon>
        <taxon>Pooideae</taxon>
        <taxon>Triticodae</taxon>
        <taxon>Triticeae</taxon>
        <taxon>Hordeinae</taxon>
        <taxon>Psathyrostachys</taxon>
    </lineage>
</organism>
<dbReference type="EMBL" id="AB078140">
    <property type="protein sequence ID" value="BAC54892.1"/>
    <property type="molecule type" value="Genomic_DNA"/>
</dbReference>
<dbReference type="RefSeq" id="YP_009672120.1">
    <property type="nucleotide sequence ID" value="NC_043838.1"/>
</dbReference>
<dbReference type="GeneID" id="40879854"/>
<dbReference type="GO" id="GO:0009507">
    <property type="term" value="C:chloroplast"/>
    <property type="evidence" value="ECO:0007669"/>
    <property type="project" value="UniProtKB-SubCell"/>
</dbReference>
<dbReference type="GO" id="GO:0003723">
    <property type="term" value="F:RNA binding"/>
    <property type="evidence" value="ECO:0007669"/>
    <property type="project" value="UniProtKB-KW"/>
</dbReference>
<dbReference type="GO" id="GO:0006397">
    <property type="term" value="P:mRNA processing"/>
    <property type="evidence" value="ECO:0007669"/>
    <property type="project" value="UniProtKB-KW"/>
</dbReference>
<dbReference type="GO" id="GO:0008380">
    <property type="term" value="P:RNA splicing"/>
    <property type="evidence" value="ECO:0007669"/>
    <property type="project" value="UniProtKB-UniRule"/>
</dbReference>
<dbReference type="GO" id="GO:0008033">
    <property type="term" value="P:tRNA processing"/>
    <property type="evidence" value="ECO:0007669"/>
    <property type="project" value="UniProtKB-KW"/>
</dbReference>
<dbReference type="HAMAP" id="MF_01390">
    <property type="entry name" value="MatK"/>
    <property type="match status" value="1"/>
</dbReference>
<dbReference type="InterPro" id="IPR024937">
    <property type="entry name" value="Domain_X"/>
</dbReference>
<dbReference type="InterPro" id="IPR002866">
    <property type="entry name" value="Maturase_MatK"/>
</dbReference>
<dbReference type="InterPro" id="IPR024942">
    <property type="entry name" value="Maturase_MatK_N"/>
</dbReference>
<dbReference type="PANTHER" id="PTHR34811">
    <property type="entry name" value="MATURASE K"/>
    <property type="match status" value="1"/>
</dbReference>
<dbReference type="PANTHER" id="PTHR34811:SF1">
    <property type="entry name" value="MATURASE K"/>
    <property type="match status" value="1"/>
</dbReference>
<dbReference type="Pfam" id="PF01348">
    <property type="entry name" value="Intron_maturas2"/>
    <property type="match status" value="1"/>
</dbReference>
<dbReference type="Pfam" id="PF01824">
    <property type="entry name" value="MatK_N"/>
    <property type="match status" value="1"/>
</dbReference>
<proteinExistence type="inferred from homology"/>
<reference key="1">
    <citation type="journal article" date="2002" name="Genome">
        <title>Molecular phylogeny of the genus Hordeum using three chloroplast DNA sequences.</title>
        <authorList>
            <person name="Nishikawa T."/>
            <person name="Salomon B."/>
            <person name="Komatsuda T."/>
            <person name="von Bothmer R."/>
            <person name="Kadowaki K."/>
        </authorList>
    </citation>
    <scope>NUCLEOTIDE SEQUENCE [GENOMIC DNA]</scope>
    <source>
        <strain>H10108</strain>
    </source>
</reference>
<geneLocation type="chloroplast"/>
<name>MATK_PSAJU</name>
<sequence>MEKFEGYSEKHKSRQQYFVYPLLFQEYIYAFAHDYGLNGSEPVEIVSCNNKKFSSLLVKRLIIRMYQQNFWDKSVNHPNQDRLLDYKNYFYSEFYSQILSEGFAIVVEIPFSLRELSCPKEKEIPKFQNLRSIHSIFPFLEDKFLHLDYLSHIEIPYPIHLEILVQLLQYRIQDVPSLHLLRFFLNYYSNWNSFITSMKSIFLFKKENKRLFRFLYNSYVSEYEFFLLFLRKQSSCLPLASSGTFLERIHFSRKMEHFGIMYPGFSRKTLWFFMDPLMHYVRYQGKAILASKGTFFLKKKWKCYLINFWQYYFCFWTQPRRIHINQLANSCFDFLGYLSSVPKSPLLVRNQMLENSFLIDTRMKKFDTIVPATPLIGYLSKAEFCTGSGHPISKPIWTDLSDWDILDRFGRICRNLFHYHSGSSKKRTLYRLKYILRLSCARTLARKHKSTVRTFMQRLGSAFLEEFFTEEEQVFSLMFTKTTLFSFCGSHTERIWYLDIIRINDLVNPLN</sequence>
<keyword id="KW-0150">Chloroplast</keyword>
<keyword id="KW-0507">mRNA processing</keyword>
<keyword id="KW-0934">Plastid</keyword>
<keyword id="KW-0694">RNA-binding</keyword>
<keyword id="KW-0819">tRNA processing</keyword>
<protein>
    <recommendedName>
        <fullName evidence="1">Maturase K</fullName>
    </recommendedName>
    <alternativeName>
        <fullName evidence="1">Intron maturase</fullName>
    </alternativeName>
</protein>